<name>HXK2_EQUZE</name>
<organism>
    <name type="scientific">Equus zebra</name>
    <name type="common">Mountain zebra</name>
    <dbReference type="NCBI Taxonomy" id="9791"/>
    <lineage>
        <taxon>Eukaryota</taxon>
        <taxon>Metazoa</taxon>
        <taxon>Chordata</taxon>
        <taxon>Craniata</taxon>
        <taxon>Vertebrata</taxon>
        <taxon>Euteleostomi</taxon>
        <taxon>Mammalia</taxon>
        <taxon>Eutheria</taxon>
        <taxon>Laurasiatheria</taxon>
        <taxon>Perissodactyla</taxon>
        <taxon>Equidae</taxon>
        <taxon>Equus</taxon>
    </lineage>
</organism>
<dbReference type="EC" id="2.7.1.1" evidence="3"/>
<dbReference type="EMBL" id="AB248869">
    <property type="protein sequence ID" value="BAF45851.1"/>
    <property type="molecule type" value="mRNA"/>
</dbReference>
<dbReference type="SMR" id="A2PYL7"/>
<dbReference type="UniPathway" id="UPA00109">
    <property type="reaction ID" value="UER00180"/>
</dbReference>
<dbReference type="UniPathway" id="UPA00242"/>
<dbReference type="GO" id="GO:0005829">
    <property type="term" value="C:cytosol"/>
    <property type="evidence" value="ECO:0007669"/>
    <property type="project" value="UniProtKB-SubCell"/>
</dbReference>
<dbReference type="GO" id="GO:0005741">
    <property type="term" value="C:mitochondrial outer membrane"/>
    <property type="evidence" value="ECO:0007669"/>
    <property type="project" value="UniProtKB-SubCell"/>
</dbReference>
<dbReference type="GO" id="GO:0005524">
    <property type="term" value="F:ATP binding"/>
    <property type="evidence" value="ECO:0007669"/>
    <property type="project" value="UniProtKB-KW"/>
</dbReference>
<dbReference type="GO" id="GO:0005536">
    <property type="term" value="F:D-glucose binding"/>
    <property type="evidence" value="ECO:0007669"/>
    <property type="project" value="InterPro"/>
</dbReference>
<dbReference type="GO" id="GO:0008865">
    <property type="term" value="F:fructokinase activity"/>
    <property type="evidence" value="ECO:0000250"/>
    <property type="project" value="UniProtKB"/>
</dbReference>
<dbReference type="GO" id="GO:0004340">
    <property type="term" value="F:glucokinase activity"/>
    <property type="evidence" value="ECO:0000250"/>
    <property type="project" value="UniProtKB"/>
</dbReference>
<dbReference type="GO" id="GO:0004396">
    <property type="term" value="F:hexokinase activity"/>
    <property type="evidence" value="ECO:0000250"/>
    <property type="project" value="UniProtKB"/>
</dbReference>
<dbReference type="GO" id="GO:0006002">
    <property type="term" value="P:fructose 6-phosphate metabolic process"/>
    <property type="evidence" value="ECO:0000250"/>
    <property type="project" value="UniProtKB"/>
</dbReference>
<dbReference type="GO" id="GO:0051156">
    <property type="term" value="P:glucose 6-phosphate metabolic process"/>
    <property type="evidence" value="ECO:0000250"/>
    <property type="project" value="UniProtKB"/>
</dbReference>
<dbReference type="GO" id="GO:0006006">
    <property type="term" value="P:glucose metabolic process"/>
    <property type="evidence" value="ECO:0007669"/>
    <property type="project" value="TreeGrafter"/>
</dbReference>
<dbReference type="GO" id="GO:0006096">
    <property type="term" value="P:glycolytic process"/>
    <property type="evidence" value="ECO:0007669"/>
    <property type="project" value="UniProtKB-UniPathway"/>
</dbReference>
<dbReference type="GO" id="GO:0001678">
    <property type="term" value="P:intracellular glucose homeostasis"/>
    <property type="evidence" value="ECO:0007669"/>
    <property type="project" value="InterPro"/>
</dbReference>
<dbReference type="CDD" id="cd24128">
    <property type="entry name" value="ASKHA_NBD_HK2_meta_rpt2"/>
    <property type="match status" value="1"/>
</dbReference>
<dbReference type="FunFam" id="3.30.420.40:FF:000015">
    <property type="entry name" value="Hexokinase 1"/>
    <property type="match status" value="1"/>
</dbReference>
<dbReference type="FunFam" id="3.40.367.20:FF:000001">
    <property type="entry name" value="Hexokinase 1"/>
    <property type="match status" value="1"/>
</dbReference>
<dbReference type="FunFam" id="3.40.367.20:FF:000020">
    <property type="entry name" value="Hexokinase-1"/>
    <property type="match status" value="1"/>
</dbReference>
<dbReference type="FunFam" id="3.30.420.40:FF:000805">
    <property type="entry name" value="Hexokinase-2"/>
    <property type="match status" value="1"/>
</dbReference>
<dbReference type="Gene3D" id="3.30.420.40">
    <property type="match status" value="2"/>
</dbReference>
<dbReference type="Gene3D" id="3.40.367.20">
    <property type="match status" value="2"/>
</dbReference>
<dbReference type="InterPro" id="IPR043129">
    <property type="entry name" value="ATPase_NBD"/>
</dbReference>
<dbReference type="InterPro" id="IPR001312">
    <property type="entry name" value="Hexokinase"/>
</dbReference>
<dbReference type="InterPro" id="IPR019807">
    <property type="entry name" value="Hexokinase_BS"/>
</dbReference>
<dbReference type="InterPro" id="IPR022673">
    <property type="entry name" value="Hexokinase_C"/>
</dbReference>
<dbReference type="InterPro" id="IPR022672">
    <property type="entry name" value="Hexokinase_N"/>
</dbReference>
<dbReference type="PANTHER" id="PTHR19443">
    <property type="entry name" value="HEXOKINASE"/>
    <property type="match status" value="1"/>
</dbReference>
<dbReference type="PANTHER" id="PTHR19443:SF4">
    <property type="entry name" value="HEXOKINASE-2"/>
    <property type="match status" value="1"/>
</dbReference>
<dbReference type="Pfam" id="PF00349">
    <property type="entry name" value="Hexokinase_1"/>
    <property type="match status" value="2"/>
</dbReference>
<dbReference type="Pfam" id="PF03727">
    <property type="entry name" value="Hexokinase_2"/>
    <property type="match status" value="2"/>
</dbReference>
<dbReference type="PRINTS" id="PR00475">
    <property type="entry name" value="HEXOKINASE"/>
</dbReference>
<dbReference type="SUPFAM" id="SSF53067">
    <property type="entry name" value="Actin-like ATPase domain"/>
    <property type="match status" value="4"/>
</dbReference>
<dbReference type="PROSITE" id="PS00378">
    <property type="entry name" value="HEXOKINASE_1"/>
    <property type="match status" value="2"/>
</dbReference>
<dbReference type="PROSITE" id="PS51748">
    <property type="entry name" value="HEXOKINASE_2"/>
    <property type="match status" value="2"/>
</dbReference>
<keyword id="KW-0007">Acetylation</keyword>
<keyword id="KW-0021">Allosteric enzyme</keyword>
<keyword id="KW-0067">ATP-binding</keyword>
<keyword id="KW-0963">Cytoplasm</keyword>
<keyword id="KW-0324">Glycolysis</keyword>
<keyword id="KW-0418">Kinase</keyword>
<keyword id="KW-0472">Membrane</keyword>
<keyword id="KW-0496">Mitochondrion</keyword>
<keyword id="KW-1000">Mitochondrion outer membrane</keyword>
<keyword id="KW-0547">Nucleotide-binding</keyword>
<keyword id="KW-0677">Repeat</keyword>
<keyword id="KW-0808">Transferase</keyword>
<comment type="function">
    <text evidence="3">Catalyzes the phosphorylation of hexose, such as D-glucose and D-fructose, to hexose 6-phosphate (D-glucose 6-phosphate and D-fructose 6-phosphate, respectively). Mediates the initial step of glycolysis by catalyzing phosphorylation of D-glucose to D-glucose 6-phosphate. Plays a key role in maintaining the integrity of the outer mitochondrial membrane by preventing the release of apoptogenic molecules from the intermembrane space and subsequent apoptosis.</text>
</comment>
<comment type="catalytic activity">
    <reaction evidence="3">
        <text>a D-hexose + ATP = a D-hexose 6-phosphate + ADP + H(+)</text>
        <dbReference type="Rhea" id="RHEA:22740"/>
        <dbReference type="ChEBI" id="CHEBI:4194"/>
        <dbReference type="ChEBI" id="CHEBI:15378"/>
        <dbReference type="ChEBI" id="CHEBI:30616"/>
        <dbReference type="ChEBI" id="CHEBI:229467"/>
        <dbReference type="ChEBI" id="CHEBI:456216"/>
        <dbReference type="EC" id="2.7.1.1"/>
    </reaction>
    <physiologicalReaction direction="left-to-right" evidence="3">
        <dbReference type="Rhea" id="RHEA:22741"/>
    </physiologicalReaction>
</comment>
<comment type="catalytic activity">
    <reaction evidence="2">
        <text>D-fructose + ATP = D-fructose 6-phosphate + ADP + H(+)</text>
        <dbReference type="Rhea" id="RHEA:16125"/>
        <dbReference type="ChEBI" id="CHEBI:15378"/>
        <dbReference type="ChEBI" id="CHEBI:30616"/>
        <dbReference type="ChEBI" id="CHEBI:37721"/>
        <dbReference type="ChEBI" id="CHEBI:61527"/>
        <dbReference type="ChEBI" id="CHEBI:456216"/>
        <dbReference type="EC" id="2.7.1.1"/>
    </reaction>
    <physiologicalReaction direction="left-to-right" evidence="2">
        <dbReference type="Rhea" id="RHEA:16126"/>
    </physiologicalReaction>
</comment>
<comment type="catalytic activity">
    <reaction evidence="3">
        <text>D-glucose + ATP = D-glucose 6-phosphate + ADP + H(+)</text>
        <dbReference type="Rhea" id="RHEA:17825"/>
        <dbReference type="ChEBI" id="CHEBI:4167"/>
        <dbReference type="ChEBI" id="CHEBI:15378"/>
        <dbReference type="ChEBI" id="CHEBI:30616"/>
        <dbReference type="ChEBI" id="CHEBI:61548"/>
        <dbReference type="ChEBI" id="CHEBI:456216"/>
        <dbReference type="EC" id="2.7.1.1"/>
    </reaction>
    <physiologicalReaction direction="left-to-right" evidence="3">
        <dbReference type="Rhea" id="RHEA:17826"/>
    </physiologicalReaction>
</comment>
<comment type="activity regulation">
    <text evidence="3">Hexokinase activity is specifically inhibited by 2,6-disubstituted glucosamines.</text>
</comment>
<comment type="pathway">
    <text evidence="3">Carbohydrate metabolism; hexose metabolism.</text>
</comment>
<comment type="pathway">
    <text evidence="3">Carbohydrate degradation; glycolysis; D-glyceraldehyde 3-phosphate and glycerone phosphate from D-glucose: step 1/4.</text>
</comment>
<comment type="subunit">
    <text evidence="1 3">Monomer (By similarity). Interacts with TIGAR; the interaction increases hexokinase activity in a hypoxia- and HIF1A-dependent manner (By similarity).</text>
</comment>
<comment type="subcellular location">
    <subcellularLocation>
        <location evidence="3">Mitochondrion outer membrane</location>
        <topology evidence="3">Peripheral membrane protein</topology>
    </subcellularLocation>
    <subcellularLocation>
        <location evidence="3">Cytoplasm</location>
        <location evidence="3">Cytosol</location>
    </subcellularLocation>
    <text evidence="3">The mitochondrial-binding peptide (MBP) region promotes association with the mitochondrial outer membrane. The interaction with the mitochondrial outer membrane via the mitochondrial-binding peptide (MBP) region promotes higher stability of the protein. Release from the mitochondrial outer membrane into the cytosol induces permeability transition pore (PTP) opening and apoptosis.</text>
</comment>
<comment type="domain">
    <text evidence="3">The N- and C-terminal halves of the protein contain a hexokinase domain. In contrast to hexokinase-1 and -3 (HK1 and HK3, respectively), both hexokinase domains display catalytic activity. The region connecting the two hexokinase domains is required for the catalytic activity of the N-terminal hexokinase domain. The N-terminal half regulates stability of the whole enzyme.</text>
</comment>
<comment type="similarity">
    <text evidence="4 6">Belongs to the hexokinase family.</text>
</comment>
<proteinExistence type="evidence at transcript level"/>
<sequence length="917" mass="102654">MIASHLLAYFFTELNHDQVQKVDQYLYHMRLSDETLLEISKRFRKEMEKGLAATTHPTASVKMLPTFVRSTPDGTEHGEFLALDLGGTNFRVLRVRVTDNGLQKVEMENQIYAIPEDIMQGSGTQLFDHIAGCLANFMDKLQIKDKKLPLGFTFSFPCIQTKLDESFLVSWTKGFKSRGVEGRDVVTLIRKAIQRRGDFDIDIVAMVNDTVATMMTCGYDDQNCEIGLIVGMGSNACYMEEMRYIDTVEGDEGRMCINMEWGAFGDDGTLDDIRTEFDQEIDMGSLNPGQQLFEKMISGMYMGELVRLILVKMAKEELLFRGKLSPELLTTGRFETKDVSEIEGEKDGIQKAREVLVRLGMDPTQEDCVATHRICQIVSTRSASLCAATLAAVLQRIKENKGEERLRSTIGVDGSVYKKHPHFAKRLQKTVRRLVPNCDIRFLCSEDGSGKGAAMVTAVAYRLAYQHRARLKTLEPLKLSREQLLEVKRRMKVEMERGLSKETHASAPVKMLPTYVCATPDGTEKGDFLALDLGGTNFRVLLVRVRNGKRRGVEMHNKIYSIPQDIMHGTGDELFDHIVQCIADFLEYMGMKGVSLPLGFTFSFPCQQNRLDESILLKWTKGFKASGCEGEDVVTLLKEAIHRREEFDLDVVAVVNDTVGTMMTCGYEDPHCEVGLIVGTGSNACYMEEMRNVELVEGEEGRMCVNTEWGAFGDNGCLDDFCTEFDVAVDELSLNPGKQRFEKMMSGMYLGEIVRNILIDFTKRGLLFRGRISERLKTRGIFETKFLSQIESDCLALQQVRAILQHLGLESTCDDSIIVKEVCTVVAQRAAQLCGAGMAAVVDKIRENRGLDTLKVTVGVDGTLYKLHPHFAKVMRETVKDLAPKCDVSFLESEDGSGKGAALITAVACRIREAGQR</sequence>
<feature type="chain" id="PRO_0000286050" description="Hexokinase-2">
    <location>
        <begin position="1"/>
        <end position="917"/>
    </location>
</feature>
<feature type="domain" description="Hexokinase 1" evidence="4">
    <location>
        <begin position="16"/>
        <end position="458"/>
    </location>
</feature>
<feature type="domain" description="Hexokinase 2" evidence="4">
    <location>
        <begin position="464"/>
        <end position="906"/>
    </location>
</feature>
<feature type="region of interest" description="Mitochondrial-binding peptide (MBP)" evidence="3">
    <location>
        <begin position="1"/>
        <end position="16"/>
    </location>
</feature>
<feature type="region of interest" description="Hexokinase small subdomain 1" evidence="4">
    <location>
        <begin position="73"/>
        <end position="207"/>
    </location>
</feature>
<feature type="region of interest" description="Hexokinase large subdomain 1" evidence="4">
    <location>
        <begin position="208"/>
        <end position="447"/>
    </location>
</feature>
<feature type="region of interest" description="Hexokinase small subdomain 2" evidence="4">
    <location>
        <begin position="521"/>
        <end position="655"/>
    </location>
</feature>
<feature type="region of interest" description="Hexokinase large subdomain 2" evidence="4">
    <location>
        <begin position="656"/>
        <end position="895"/>
    </location>
</feature>
<feature type="binding site" evidence="1">
    <location>
        <position position="30"/>
    </location>
    <ligand>
        <name>ATP</name>
        <dbReference type="ChEBI" id="CHEBI:30616"/>
        <label>1</label>
    </ligand>
</feature>
<feature type="binding site" evidence="1">
    <location>
        <begin position="84"/>
        <end position="89"/>
    </location>
    <ligand>
        <name>ATP</name>
        <dbReference type="ChEBI" id="CHEBI:30616"/>
        <label>1</label>
    </ligand>
</feature>
<feature type="binding site" evidence="3">
    <location>
        <begin position="84"/>
        <end position="88"/>
    </location>
    <ligand>
        <name>D-glucose 6-phosphate</name>
        <dbReference type="ChEBI" id="CHEBI:61548"/>
        <label>1</label>
    </ligand>
</feature>
<feature type="binding site" evidence="3">
    <location>
        <begin position="155"/>
        <end position="156"/>
    </location>
    <ligand>
        <name>D-glucose</name>
        <dbReference type="ChEBI" id="CHEBI:4167"/>
        <label>1</label>
    </ligand>
</feature>
<feature type="binding site" evidence="3">
    <location>
        <begin position="172"/>
        <end position="173"/>
    </location>
    <ligand>
        <name>D-glucose</name>
        <dbReference type="ChEBI" id="CHEBI:4167"/>
        <label>1</label>
    </ligand>
</feature>
<feature type="binding site" evidence="3">
    <location>
        <begin position="208"/>
        <end position="209"/>
    </location>
    <ligand>
        <name>D-glucose</name>
        <dbReference type="ChEBI" id="CHEBI:4167"/>
        <label>1</label>
    </ligand>
</feature>
<feature type="binding site" evidence="3">
    <location>
        <position position="209"/>
    </location>
    <ligand>
        <name>D-glucose 6-phosphate</name>
        <dbReference type="ChEBI" id="CHEBI:61548"/>
        <label>1</label>
    </ligand>
</feature>
<feature type="binding site" evidence="3">
    <location>
        <position position="235"/>
    </location>
    <ligand>
        <name>D-glucose</name>
        <dbReference type="ChEBI" id="CHEBI:4167"/>
        <label>1</label>
    </ligand>
</feature>
<feature type="binding site" evidence="3">
    <location>
        <position position="260"/>
    </location>
    <ligand>
        <name>D-glucose</name>
        <dbReference type="ChEBI" id="CHEBI:4167"/>
        <label>1</label>
    </ligand>
</feature>
<feature type="binding site" evidence="3">
    <location>
        <begin position="291"/>
        <end position="294"/>
    </location>
    <ligand>
        <name>D-glucose</name>
        <dbReference type="ChEBI" id="CHEBI:4167"/>
        <label>1</label>
    </ligand>
</feature>
<feature type="binding site" evidence="3">
    <location>
        <begin position="413"/>
        <end position="415"/>
    </location>
    <ligand>
        <name>D-glucose 6-phosphate</name>
        <dbReference type="ChEBI" id="CHEBI:61548"/>
        <label>1</label>
    </ligand>
</feature>
<feature type="binding site" evidence="1">
    <location>
        <begin position="425"/>
        <end position="426"/>
    </location>
    <ligand>
        <name>ATP</name>
        <dbReference type="ChEBI" id="CHEBI:30616"/>
        <label>1</label>
    </ligand>
</feature>
<feature type="binding site" evidence="3">
    <location>
        <position position="449"/>
    </location>
    <ligand>
        <name>D-glucose 6-phosphate</name>
        <dbReference type="ChEBI" id="CHEBI:61548"/>
        <label>1</label>
    </ligand>
</feature>
<feature type="binding site" evidence="1">
    <location>
        <begin position="532"/>
        <end position="537"/>
    </location>
    <ligand>
        <name>ATP</name>
        <dbReference type="ChEBI" id="CHEBI:30616"/>
        <label>2</label>
    </ligand>
</feature>
<feature type="binding site" evidence="3">
    <location>
        <begin position="532"/>
        <end position="536"/>
    </location>
    <ligand>
        <name>D-glucose 6-phosphate</name>
        <dbReference type="ChEBI" id="CHEBI:61548"/>
        <label>2</label>
    </ligand>
</feature>
<feature type="binding site" evidence="3">
    <location>
        <begin position="603"/>
        <end position="604"/>
    </location>
    <ligand>
        <name>D-glucose</name>
        <dbReference type="ChEBI" id="CHEBI:4167"/>
        <label>2</label>
    </ligand>
</feature>
<feature type="binding site" evidence="3">
    <location>
        <begin position="620"/>
        <end position="621"/>
    </location>
    <ligand>
        <name>D-glucose</name>
        <dbReference type="ChEBI" id="CHEBI:4167"/>
        <label>2</label>
    </ligand>
</feature>
<feature type="binding site" evidence="3">
    <location>
        <begin position="656"/>
        <end position="657"/>
    </location>
    <ligand>
        <name>D-glucose</name>
        <dbReference type="ChEBI" id="CHEBI:4167"/>
        <label>2</label>
    </ligand>
</feature>
<feature type="binding site" evidence="3">
    <location>
        <position position="657"/>
    </location>
    <ligand>
        <name>D-glucose 6-phosphate</name>
        <dbReference type="ChEBI" id="CHEBI:61548"/>
        <label>2</label>
    </ligand>
</feature>
<feature type="binding site" evidence="1">
    <location>
        <position position="680"/>
    </location>
    <ligand>
        <name>ATP</name>
        <dbReference type="ChEBI" id="CHEBI:30616"/>
        <label>2</label>
    </ligand>
</feature>
<feature type="binding site" evidence="3">
    <location>
        <position position="680"/>
    </location>
    <ligand>
        <name>D-glucose 6-phosphate</name>
        <dbReference type="ChEBI" id="CHEBI:61548"/>
        <label>2</label>
    </ligand>
</feature>
<feature type="binding site" evidence="3">
    <location>
        <begin position="682"/>
        <end position="683"/>
    </location>
    <ligand>
        <name>D-glucose</name>
        <dbReference type="ChEBI" id="CHEBI:4167"/>
        <label>2</label>
    </ligand>
</feature>
<feature type="binding site" evidence="3">
    <location>
        <position position="708"/>
    </location>
    <ligand>
        <name>D-glucose</name>
        <dbReference type="ChEBI" id="CHEBI:4167"/>
        <label>2</label>
    </ligand>
</feature>
<feature type="binding site" evidence="3">
    <location>
        <begin position="739"/>
        <end position="742"/>
    </location>
    <ligand>
        <name>D-glucose</name>
        <dbReference type="ChEBI" id="CHEBI:4167"/>
        <label>2</label>
    </ligand>
</feature>
<feature type="binding site" evidence="1">
    <location>
        <begin position="747"/>
        <end position="748"/>
    </location>
    <ligand>
        <name>ATP</name>
        <dbReference type="ChEBI" id="CHEBI:30616"/>
        <label>2</label>
    </ligand>
</feature>
<feature type="binding site" evidence="1">
    <location>
        <begin position="784"/>
        <end position="788"/>
    </location>
    <ligand>
        <name>ATP</name>
        <dbReference type="ChEBI" id="CHEBI:30616"/>
        <label>2</label>
    </ligand>
</feature>
<feature type="binding site" evidence="3">
    <location>
        <begin position="861"/>
        <end position="863"/>
    </location>
    <ligand>
        <name>D-glucose 6-phosphate</name>
        <dbReference type="ChEBI" id="CHEBI:61548"/>
        <label>2</label>
    </ligand>
</feature>
<feature type="binding site" evidence="1">
    <location>
        <begin position="863"/>
        <end position="867"/>
    </location>
    <ligand>
        <name>ATP</name>
        <dbReference type="ChEBI" id="CHEBI:30616"/>
        <label>2</label>
    </ligand>
</feature>
<feature type="binding site" evidence="3">
    <location>
        <position position="897"/>
    </location>
    <ligand>
        <name>D-glucose 6-phosphate</name>
        <dbReference type="ChEBI" id="CHEBI:61548"/>
        <label>2</label>
    </ligand>
</feature>
<feature type="modified residue" description="N-acetylmethionine" evidence="3">
    <location>
        <position position="1"/>
    </location>
</feature>
<accession>A2PYL7</accession>
<evidence type="ECO:0000250" key="1">
    <source>
        <dbReference type="UniProtKB" id="P19367"/>
    </source>
</evidence>
<evidence type="ECO:0000250" key="2">
    <source>
        <dbReference type="UniProtKB" id="P27881"/>
    </source>
</evidence>
<evidence type="ECO:0000250" key="3">
    <source>
        <dbReference type="UniProtKB" id="P52789"/>
    </source>
</evidence>
<evidence type="ECO:0000255" key="4">
    <source>
        <dbReference type="PROSITE-ProRule" id="PRU01084"/>
    </source>
</evidence>
<evidence type="ECO:0000303" key="5">
    <source>
    </source>
</evidence>
<evidence type="ECO:0000305" key="6"/>
<reference key="1">
    <citation type="journal article" date="2007" name="DNA Seq.">
        <title>Sequencing of cDNA and proximal promoter of equine hexokinase II gene.</title>
        <authorList>
            <person name="Sato T."/>
            <person name="Itou T."/>
            <person name="Sato G."/>
            <person name="Kobayashi Y."/>
            <person name="Endo H."/>
            <person name="Sakai T."/>
        </authorList>
    </citation>
    <scope>NUCLEOTIDE SEQUENCE [MRNA]</scope>
    <source>
        <tissue>Skeletal muscle</tissue>
    </source>
</reference>
<protein>
    <recommendedName>
        <fullName evidence="6">Hexokinase-2</fullName>
        <ecNumber evidence="3">2.7.1.1</ecNumber>
    </recommendedName>
    <alternativeName>
        <fullName evidence="5">Hexokinase type II</fullName>
        <shortName evidence="5">HK II</shortName>
    </alternativeName>
</protein>
<gene>
    <name evidence="3" type="primary">HK2</name>
</gene>